<organism>
    <name type="scientific">Homo sapiens</name>
    <name type="common">Human</name>
    <dbReference type="NCBI Taxonomy" id="9606"/>
    <lineage>
        <taxon>Eukaryota</taxon>
        <taxon>Metazoa</taxon>
        <taxon>Chordata</taxon>
        <taxon>Craniata</taxon>
        <taxon>Vertebrata</taxon>
        <taxon>Euteleostomi</taxon>
        <taxon>Mammalia</taxon>
        <taxon>Eutheria</taxon>
        <taxon>Euarchontoglires</taxon>
        <taxon>Primates</taxon>
        <taxon>Haplorrhini</taxon>
        <taxon>Catarrhini</taxon>
        <taxon>Hominidae</taxon>
        <taxon>Homo</taxon>
    </lineage>
</organism>
<comment type="function">
    <text evidence="9 10 11">S-adenosyl-L-methionine-dependent methyltransferase that mediates mRNA cap1 2'-O-ribose methylation to the 5'-cap structure of mRNAs. Methylates the ribose of the first nucleotide of a m(7)GpppG-capped mRNA and small nuclear RNA (snRNA) to produce m(7)GpppRm (cap1). Displays a preference for cap0 transcripts. Cap1 modification is linked to higher levels of translation. May be involved in the interferon response pathway.</text>
</comment>
<comment type="catalytic activity">
    <reaction evidence="11">
        <text>a 5'-end (N(7)-methyl 5'-triphosphoguanosine)-ribonucleoside in mRNA + S-adenosyl-L-methionine = a 5'-end (N(7)-methyl 5'-triphosphoguanosine)-(2'-O-methyl-ribonucleoside) in mRNA + S-adenosyl-L-homocysteine + H(+)</text>
        <dbReference type="Rhea" id="RHEA:67020"/>
        <dbReference type="Rhea" id="RHEA-COMP:17167"/>
        <dbReference type="Rhea" id="RHEA-COMP:17168"/>
        <dbReference type="ChEBI" id="CHEBI:15378"/>
        <dbReference type="ChEBI" id="CHEBI:57856"/>
        <dbReference type="ChEBI" id="CHEBI:59789"/>
        <dbReference type="ChEBI" id="CHEBI:156461"/>
        <dbReference type="ChEBI" id="CHEBI:167609"/>
        <dbReference type="EC" id="2.1.1.57"/>
    </reaction>
</comment>
<comment type="subunit">
    <text evidence="9">Interacts with POLR2A (via C-terminus).</text>
</comment>
<comment type="subcellular location">
    <subcellularLocation>
        <location evidence="9 11">Nucleus</location>
    </subcellularLocation>
</comment>
<comment type="induction">
    <text evidence="7 8 9">By interferons alpha and beta, and by Vaccinia virus infection.</text>
</comment>
<comment type="sequence caution" evidence="13">
    <conflict type="erroneous initiation">
        <sequence resource="EMBL-CDS" id="BAA07893"/>
    </conflict>
    <text>Extended N-terminus.</text>
</comment>
<feature type="chain" id="PRO_0000251239" description="Cap-specific mRNA (nucleoside-2'-O-)-methyltransferase 1">
    <location>
        <begin position="1"/>
        <end position="835"/>
    </location>
</feature>
<feature type="domain" description="G-patch" evidence="2">
    <location>
        <begin position="87"/>
        <end position="133"/>
    </location>
</feature>
<feature type="domain" description="RrmJ-type SAM-dependent 2'-O-MTase" evidence="5">
    <location>
        <begin position="231"/>
        <end position="450"/>
    </location>
</feature>
<feature type="domain" description="WW" evidence="3">
    <location>
        <begin position="752"/>
        <end position="786"/>
    </location>
</feature>
<feature type="region of interest" description="Disordered" evidence="6">
    <location>
        <begin position="1"/>
        <end position="67"/>
    </location>
</feature>
<feature type="region of interest" description="Interaction with POLR2A" evidence="9">
    <location>
        <begin position="727"/>
        <end position="835"/>
    </location>
</feature>
<feature type="short sequence motif" description="Bipartite nuclear localization signal" evidence="4 15">
    <location>
        <begin position="2"/>
        <end position="19"/>
    </location>
</feature>
<feature type="compositionally biased region" description="Polar residues" evidence="6">
    <location>
        <begin position="37"/>
        <end position="54"/>
    </location>
</feature>
<feature type="compositionally biased region" description="Basic and acidic residues" evidence="6">
    <location>
        <begin position="57"/>
        <end position="67"/>
    </location>
</feature>
<feature type="active site" evidence="14">
    <location>
        <position position="239"/>
    </location>
</feature>
<feature type="active site" evidence="14">
    <location>
        <position position="364"/>
    </location>
</feature>
<feature type="active site" description="Proton acceptor" evidence="14">
    <location>
        <position position="404"/>
    </location>
</feature>
<feature type="binding site" evidence="12 16 17">
    <location>
        <begin position="203"/>
        <end position="207"/>
    </location>
    <ligand>
        <name>substrate</name>
    </ligand>
</feature>
<feature type="binding site" evidence="12 16 17">
    <location>
        <position position="218"/>
    </location>
    <ligand>
        <name>substrate</name>
    </ligand>
</feature>
<feature type="binding site" evidence="12 16 17">
    <location>
        <position position="234"/>
    </location>
    <ligand>
        <name>S-adenosyl-L-methionine</name>
        <dbReference type="ChEBI" id="CHEBI:59789"/>
    </ligand>
</feature>
<feature type="binding site" evidence="12 16 17">
    <location>
        <begin position="277"/>
        <end position="283"/>
    </location>
    <ligand>
        <name>S-adenosyl-L-methionine</name>
        <dbReference type="ChEBI" id="CHEBI:59789"/>
    </ligand>
</feature>
<feature type="binding site" evidence="12 16 17">
    <location>
        <begin position="335"/>
        <end position="336"/>
    </location>
    <ligand>
        <name>S-adenosyl-L-methionine</name>
        <dbReference type="ChEBI" id="CHEBI:59789"/>
    </ligand>
</feature>
<feature type="binding site" evidence="12 16 17">
    <location>
        <begin position="374"/>
        <end position="376"/>
    </location>
    <ligand>
        <name>substrate</name>
    </ligand>
</feature>
<feature type="binding site" evidence="12 16 17">
    <location>
        <position position="439"/>
    </location>
    <ligand>
        <name>substrate</name>
    </ligand>
</feature>
<feature type="modified residue" description="Phosphoserine" evidence="1">
    <location>
        <position position="28"/>
    </location>
</feature>
<feature type="modified residue" description="Phosphoserine" evidence="1">
    <location>
        <position position="31"/>
    </location>
</feature>
<feature type="modified residue" description="Phosphoserine" evidence="20">
    <location>
        <position position="53"/>
    </location>
</feature>
<feature type="modified residue" description="Phosphoserine" evidence="19">
    <location>
        <position position="66"/>
    </location>
</feature>
<feature type="modified residue" description="Phosphoserine" evidence="19">
    <location>
        <position position="91"/>
    </location>
</feature>
<feature type="modified residue" description="N6-acetyllysine" evidence="18">
    <location>
        <position position="108"/>
    </location>
</feature>
<feature type="mutagenesis site" description="Reduces both mRNA cap binding and catalytic activity of the enzyme." evidence="12">
    <original>K</original>
    <variation>A</variation>
    <location>
        <position position="203"/>
    </location>
</feature>
<feature type="mutagenesis site" description="No effect." evidence="12">
    <original>R</original>
    <variation>A</variation>
    <location>
        <position position="228"/>
    </location>
</feature>
<feature type="mutagenesis site" description="Abolishes catalytic activity." evidence="11">
    <original>K</original>
    <variation>A</variation>
    <location>
        <position position="239"/>
    </location>
</feature>
<feature type="mutagenesis site" description="Abolishes catalytic activity." evidence="11">
    <original>D</original>
    <variation>A</variation>
    <location>
        <position position="364"/>
    </location>
</feature>
<feature type="mutagenesis site" description="Abolishes catalytic activity." evidence="11">
    <original>K</original>
    <variation>A</variation>
    <location>
        <position position="404"/>
    </location>
</feature>
<feature type="sequence conflict" description="In Ref. 3; BAF85253." evidence="13" ref="3">
    <original>Y</original>
    <variation>H</variation>
    <location>
        <position position="795"/>
    </location>
</feature>
<feature type="strand" evidence="23">
    <location>
        <begin position="143"/>
        <end position="146"/>
    </location>
</feature>
<feature type="turn" evidence="22">
    <location>
        <begin position="168"/>
        <end position="174"/>
    </location>
</feature>
<feature type="strand" evidence="22">
    <location>
        <begin position="176"/>
        <end position="179"/>
    </location>
</feature>
<feature type="helix" evidence="23">
    <location>
        <begin position="184"/>
        <end position="186"/>
    </location>
</feature>
<feature type="strand" evidence="21">
    <location>
        <begin position="189"/>
        <end position="191"/>
    </location>
</feature>
<feature type="helix" evidence="22">
    <location>
        <begin position="193"/>
        <end position="204"/>
    </location>
</feature>
<feature type="helix" evidence="22">
    <location>
        <begin position="205"/>
        <end position="208"/>
    </location>
</feature>
<feature type="helix" evidence="22">
    <location>
        <begin position="211"/>
        <end position="221"/>
    </location>
</feature>
<feature type="helix" evidence="22">
    <location>
        <begin position="225"/>
        <end position="227"/>
    </location>
</feature>
<feature type="turn" evidence="22">
    <location>
        <begin position="228"/>
        <end position="231"/>
    </location>
</feature>
<feature type="strand" evidence="22">
    <location>
        <begin position="232"/>
        <end position="234"/>
    </location>
</feature>
<feature type="helix" evidence="22">
    <location>
        <begin position="235"/>
        <end position="246"/>
    </location>
</feature>
<feature type="turn" evidence="22">
    <location>
        <begin position="247"/>
        <end position="252"/>
    </location>
</feature>
<feature type="helix" evidence="22">
    <location>
        <begin position="265"/>
        <end position="267"/>
    </location>
</feature>
<feature type="strand" evidence="22">
    <location>
        <begin position="271"/>
        <end position="277"/>
    </location>
</feature>
<feature type="helix" evidence="22">
    <location>
        <begin position="282"/>
        <end position="291"/>
    </location>
</feature>
<feature type="strand" evidence="22">
    <location>
        <begin position="293"/>
        <end position="300"/>
    </location>
</feature>
<feature type="helix" evidence="22">
    <location>
        <begin position="310"/>
        <end position="312"/>
    </location>
</feature>
<feature type="turn" evidence="23">
    <location>
        <begin position="313"/>
        <end position="316"/>
    </location>
</feature>
<feature type="turn" evidence="23">
    <location>
        <begin position="318"/>
        <end position="320"/>
    </location>
</feature>
<feature type="strand" evidence="23">
    <location>
        <begin position="321"/>
        <end position="323"/>
    </location>
</feature>
<feature type="strand" evidence="22">
    <location>
        <begin position="326"/>
        <end position="328"/>
    </location>
</feature>
<feature type="helix" evidence="21">
    <location>
        <begin position="329"/>
        <end position="331"/>
    </location>
</feature>
<feature type="helix" evidence="22">
    <location>
        <begin position="339"/>
        <end position="351"/>
    </location>
</feature>
<feature type="turn" evidence="22">
    <location>
        <begin position="352"/>
        <end position="355"/>
    </location>
</feature>
<feature type="strand" evidence="22">
    <location>
        <begin position="358"/>
        <end position="363"/>
    </location>
</feature>
<feature type="turn" evidence="21">
    <location>
        <begin position="370"/>
        <end position="372"/>
    </location>
</feature>
<feature type="helix" evidence="22">
    <location>
        <begin position="373"/>
        <end position="375"/>
    </location>
</feature>
<feature type="helix" evidence="22">
    <location>
        <begin position="376"/>
        <end position="379"/>
    </location>
</feature>
<feature type="helix" evidence="22">
    <location>
        <begin position="381"/>
        <end position="394"/>
    </location>
</feature>
<feature type="strand" evidence="22">
    <location>
        <begin position="395"/>
        <end position="405"/>
    </location>
</feature>
<feature type="helix" evidence="22">
    <location>
        <begin position="411"/>
        <end position="423"/>
    </location>
</feature>
<feature type="strand" evidence="22">
    <location>
        <begin position="424"/>
        <end position="430"/>
    </location>
</feature>
<feature type="strand" evidence="22">
    <location>
        <begin position="442"/>
        <end position="449"/>
    </location>
</feature>
<feature type="helix" evidence="22">
    <location>
        <begin position="454"/>
        <end position="470"/>
    </location>
</feature>
<feature type="strand" evidence="22">
    <location>
        <begin position="473"/>
        <end position="481"/>
    </location>
</feature>
<feature type="helix" evidence="22">
    <location>
        <begin position="483"/>
        <end position="487"/>
    </location>
</feature>
<feature type="helix" evidence="22">
    <location>
        <begin position="490"/>
        <end position="519"/>
    </location>
</feature>
<feature type="helix" evidence="22">
    <location>
        <begin position="528"/>
        <end position="539"/>
    </location>
</feature>
<keyword id="KW-0002">3D-structure</keyword>
<keyword id="KW-0007">Acetylation</keyword>
<keyword id="KW-0489">Methyltransferase</keyword>
<keyword id="KW-0506">mRNA capping</keyword>
<keyword id="KW-0507">mRNA processing</keyword>
<keyword id="KW-0539">Nucleus</keyword>
<keyword id="KW-0597">Phosphoprotein</keyword>
<keyword id="KW-1267">Proteomics identification</keyword>
<keyword id="KW-1185">Reference proteome</keyword>
<keyword id="KW-0949">S-adenosyl-L-methionine</keyword>
<keyword id="KW-0808">Transferase</keyword>
<sequence>MKRRTDPECTAPIKKQKKRVAELALSLSSTSDDEPPSSVSHGAKASTTSLSGSDSETEGKQHSSDSFDDAFKADSLVEGTSSRYSMYNSVSQKLMAKMGFREGEGLGKYSQGRKDIVEASSQKGRRGLGLTLRGFDQELNVDWRDEPEPSACEQVSWFPECTTEIPDTQEMSDWMVVGKRKMIIEDETEFCGEELLHSVLQCKSVFDVLDGEEMRRARTRANPYEMIRGVFFLNRAAMKMANMDFVFDRMFTNPRDSYGKPLVKDREAELLYFADVCAGPGGFSEYVLWRKKWHAKGFGMTLKGPNDFKLEDFYSASSELFEPYYGEGGIDGDGDITRPENISAFRNFVLDNTDRKGVHFLMADGGFSVEGQENLQEILSKQLLLCQFLMALSIVRTGGHFICKTFDLFTPFSVGLVYLLYCCFERVCLFKPITSRPANSERYVVCKGLKVGIDDVRDYLFAVNIKLNQLRNTDSDVNLVVPLEVIKGDHEFTDYMIRSNESHCSLQIKALAKIHAFVQDTTLSEPRQAEIRKECLRLWGIPDQARVAPSSSDPKSKFFELIQGTEIDIFSYKPTLLTSKTLEKIRPVFDYRCMVSGSEQKFLIGLGKSQIYTWDGRQSDRWIKLDLKTELPRDTLLSVEIVHELKGEGKAQRKISAIHILDVLVLNGTDVREQHFNQRIQLAEKFVKAVSKPSRPDMNPIRVKEVYRLEEMEKIFVRLEMKIIKGSSGTPKLSYTGRDDRHFVPMGLYIVRTVNEPWTMGFSKSFKKKFFYNKKTKDSTFDLPADSIAPFHICYYGRLFWEWGDGIRVHDSQKPQDQDKLSKEDVLSFIQMHRA</sequence>
<accession>Q8N1G2</accession>
<accession>A8K949</accession>
<accession>Q14670</accession>
<accession>Q96FJ9</accession>
<gene>
    <name type="primary">CMTR1</name>
    <name type="synonym">FTSJD2</name>
    <name type="synonym">KIAA0082</name>
    <name type="synonym">MTR1</name>
</gene>
<evidence type="ECO:0000250" key="1">
    <source>
        <dbReference type="UniProtKB" id="Q9DBC3"/>
    </source>
</evidence>
<evidence type="ECO:0000255" key="2">
    <source>
        <dbReference type="PROSITE-ProRule" id="PRU00092"/>
    </source>
</evidence>
<evidence type="ECO:0000255" key="3">
    <source>
        <dbReference type="PROSITE-ProRule" id="PRU00224"/>
    </source>
</evidence>
<evidence type="ECO:0000255" key="4">
    <source>
        <dbReference type="PROSITE-ProRule" id="PRU00768"/>
    </source>
</evidence>
<evidence type="ECO:0000255" key="5">
    <source>
        <dbReference type="PROSITE-ProRule" id="PRU00945"/>
    </source>
</evidence>
<evidence type="ECO:0000256" key="6">
    <source>
        <dbReference type="SAM" id="MobiDB-lite"/>
    </source>
</evidence>
<evidence type="ECO:0000269" key="7">
    <source>
    </source>
</evidence>
<evidence type="ECO:0000269" key="8">
    <source>
    </source>
</evidence>
<evidence type="ECO:0000269" key="9">
    <source>
    </source>
</evidence>
<evidence type="ECO:0000269" key="10">
    <source>
    </source>
</evidence>
<evidence type="ECO:0000269" key="11">
    <source>
    </source>
</evidence>
<evidence type="ECO:0000269" key="12">
    <source>
    </source>
</evidence>
<evidence type="ECO:0000305" key="13"/>
<evidence type="ECO:0000305" key="14">
    <source>
    </source>
</evidence>
<evidence type="ECO:0000305" key="15">
    <source>
    </source>
</evidence>
<evidence type="ECO:0007744" key="16">
    <source>
        <dbReference type="PDB" id="4N48"/>
    </source>
</evidence>
<evidence type="ECO:0007744" key="17">
    <source>
        <dbReference type="PDB" id="4N49"/>
    </source>
</evidence>
<evidence type="ECO:0007744" key="18">
    <source>
    </source>
</evidence>
<evidence type="ECO:0007744" key="19">
    <source>
    </source>
</evidence>
<evidence type="ECO:0007744" key="20">
    <source>
    </source>
</evidence>
<evidence type="ECO:0007829" key="21">
    <source>
        <dbReference type="PDB" id="4N48"/>
    </source>
</evidence>
<evidence type="ECO:0007829" key="22">
    <source>
        <dbReference type="PDB" id="4N49"/>
    </source>
</evidence>
<evidence type="ECO:0007829" key="23">
    <source>
        <dbReference type="PDB" id="4N4A"/>
    </source>
</evidence>
<dbReference type="EC" id="2.1.1.57" evidence="11"/>
<dbReference type="EMBL" id="D43949">
    <property type="protein sequence ID" value="BAA07893.2"/>
    <property type="status" value="ALT_INIT"/>
    <property type="molecule type" value="mRNA"/>
</dbReference>
<dbReference type="EMBL" id="AK292564">
    <property type="protein sequence ID" value="BAF85253.1"/>
    <property type="molecule type" value="mRNA"/>
</dbReference>
<dbReference type="EMBL" id="AL353597">
    <property type="status" value="NOT_ANNOTATED_CDS"/>
    <property type="molecule type" value="Genomic_DNA"/>
</dbReference>
<dbReference type="EMBL" id="BC010731">
    <property type="protein sequence ID" value="AAH10731.2"/>
    <property type="molecule type" value="mRNA"/>
</dbReference>
<dbReference type="EMBL" id="BC031890">
    <property type="protein sequence ID" value="AAH31890.1"/>
    <property type="molecule type" value="mRNA"/>
</dbReference>
<dbReference type="CCDS" id="CCDS4835.1"/>
<dbReference type="RefSeq" id="NP_055865.1">
    <property type="nucleotide sequence ID" value="NM_015050.3"/>
</dbReference>
<dbReference type="RefSeq" id="XP_047274418.1">
    <property type="nucleotide sequence ID" value="XM_047418462.1"/>
</dbReference>
<dbReference type="RefSeq" id="XP_047274419.1">
    <property type="nucleotide sequence ID" value="XM_047418463.1"/>
</dbReference>
<dbReference type="RefSeq" id="XP_054210779.1">
    <property type="nucleotide sequence ID" value="XM_054354804.1"/>
</dbReference>
<dbReference type="RefSeq" id="XP_054210780.1">
    <property type="nucleotide sequence ID" value="XM_054354805.1"/>
</dbReference>
<dbReference type="PDB" id="4N48">
    <property type="method" value="X-ray"/>
    <property type="resolution" value="2.70 A"/>
    <property type="chains" value="A/B=126-550"/>
</dbReference>
<dbReference type="PDB" id="4N49">
    <property type="method" value="X-ray"/>
    <property type="resolution" value="1.90 A"/>
    <property type="chains" value="A=126-550"/>
</dbReference>
<dbReference type="PDB" id="4N4A">
    <property type="method" value="X-ray"/>
    <property type="resolution" value="2.35 A"/>
    <property type="chains" value="A=126-550"/>
</dbReference>
<dbReference type="PDB" id="8P4E">
    <property type="method" value="EM"/>
    <property type="resolution" value="3.90 A"/>
    <property type="chains" value="O=1-835"/>
</dbReference>
<dbReference type="PDB" id="8P4F">
    <property type="method" value="EM"/>
    <property type="resolution" value="4.00 A"/>
    <property type="chains" value="O=1-835"/>
</dbReference>
<dbReference type="PDB" id="8W8F">
    <property type="method" value="EM"/>
    <property type="resolution" value="4.00 A"/>
    <property type="chains" value="b=1-835"/>
</dbReference>
<dbReference type="PDBsum" id="4N48"/>
<dbReference type="PDBsum" id="4N49"/>
<dbReference type="PDBsum" id="4N4A"/>
<dbReference type="PDBsum" id="8P4E"/>
<dbReference type="PDBsum" id="8P4F"/>
<dbReference type="PDBsum" id="8W8F"/>
<dbReference type="EMDB" id="EMD-17407"/>
<dbReference type="EMDB" id="EMD-17408"/>
<dbReference type="EMDB" id="EMD-37353"/>
<dbReference type="SMR" id="Q8N1G2"/>
<dbReference type="BioGRID" id="116703">
    <property type="interactions" value="228"/>
</dbReference>
<dbReference type="FunCoup" id="Q8N1G2">
    <property type="interactions" value="5272"/>
</dbReference>
<dbReference type="IntAct" id="Q8N1G2">
    <property type="interactions" value="38"/>
</dbReference>
<dbReference type="MINT" id="Q8N1G2"/>
<dbReference type="STRING" id="9606.ENSP00000362550"/>
<dbReference type="DrugBank" id="DB00118">
    <property type="generic name" value="Ademetionine"/>
</dbReference>
<dbReference type="GlyGen" id="Q8N1G2">
    <property type="glycosylation" value="2 sites, 1 N-linked glycan (1 site), 1 O-linked glycan (1 site)"/>
</dbReference>
<dbReference type="iPTMnet" id="Q8N1G2"/>
<dbReference type="PhosphoSitePlus" id="Q8N1G2"/>
<dbReference type="BioMuta" id="CMTR1"/>
<dbReference type="DMDM" id="74750894"/>
<dbReference type="jPOST" id="Q8N1G2"/>
<dbReference type="MassIVE" id="Q8N1G2"/>
<dbReference type="PaxDb" id="9606-ENSP00000362550"/>
<dbReference type="PeptideAtlas" id="Q8N1G2"/>
<dbReference type="ProteomicsDB" id="71600"/>
<dbReference type="Pumba" id="Q8N1G2"/>
<dbReference type="TopDownProteomics" id="Q8N1G2"/>
<dbReference type="Antibodypedia" id="29815">
    <property type="antibodies" value="60 antibodies from 13 providers"/>
</dbReference>
<dbReference type="DNASU" id="23070"/>
<dbReference type="Ensembl" id="ENST00000373451.9">
    <property type="protein sequence ID" value="ENSP00000362550.4"/>
    <property type="gene ID" value="ENSG00000137200.13"/>
</dbReference>
<dbReference type="GeneID" id="23070"/>
<dbReference type="KEGG" id="hsa:23070"/>
<dbReference type="MANE-Select" id="ENST00000373451.9">
    <property type="protein sequence ID" value="ENSP00000362550.4"/>
    <property type="RefSeq nucleotide sequence ID" value="NM_015050.3"/>
    <property type="RefSeq protein sequence ID" value="NP_055865.1"/>
</dbReference>
<dbReference type="UCSC" id="uc003ons.4">
    <property type="organism name" value="human"/>
</dbReference>
<dbReference type="AGR" id="HGNC:21077"/>
<dbReference type="CTD" id="23070"/>
<dbReference type="DisGeNET" id="23070"/>
<dbReference type="GeneCards" id="CMTR1"/>
<dbReference type="HGNC" id="HGNC:21077">
    <property type="gene designation" value="CMTR1"/>
</dbReference>
<dbReference type="HPA" id="ENSG00000137200">
    <property type="expression patterns" value="Low tissue specificity"/>
</dbReference>
<dbReference type="MIM" id="616189">
    <property type="type" value="gene"/>
</dbReference>
<dbReference type="neXtProt" id="NX_Q8N1G2"/>
<dbReference type="OpenTargets" id="ENSG00000137200"/>
<dbReference type="PharmGKB" id="PA162389052"/>
<dbReference type="VEuPathDB" id="HostDB:ENSG00000137200"/>
<dbReference type="eggNOG" id="KOG3673">
    <property type="taxonomic scope" value="Eukaryota"/>
</dbReference>
<dbReference type="GeneTree" id="ENSGT00940000157172"/>
<dbReference type="HOGENOM" id="CLU_011097_0_0_1"/>
<dbReference type="InParanoid" id="Q8N1G2"/>
<dbReference type="OMA" id="CTLFLCK"/>
<dbReference type="OrthoDB" id="10251234at2759"/>
<dbReference type="PAN-GO" id="Q8N1G2">
    <property type="GO annotations" value="5 GO annotations based on evolutionary models"/>
</dbReference>
<dbReference type="PhylomeDB" id="Q8N1G2"/>
<dbReference type="TreeFam" id="TF314897"/>
<dbReference type="BioCyc" id="MetaCyc:ENSG00000137200-MONOMER"/>
<dbReference type="BRENDA" id="2.1.1.57">
    <property type="organism ID" value="2681"/>
</dbReference>
<dbReference type="PathwayCommons" id="Q8N1G2"/>
<dbReference type="SignaLink" id="Q8N1G2"/>
<dbReference type="BioGRID-ORCS" id="23070">
    <property type="hits" value="615 hits in 1162 CRISPR screens"/>
</dbReference>
<dbReference type="ChiTaRS" id="CMTR1">
    <property type="organism name" value="human"/>
</dbReference>
<dbReference type="EvolutionaryTrace" id="Q8N1G2"/>
<dbReference type="GenomeRNAi" id="23070"/>
<dbReference type="Pharos" id="Q8N1G2">
    <property type="development level" value="Tbio"/>
</dbReference>
<dbReference type="PRO" id="PR:Q8N1G2"/>
<dbReference type="Proteomes" id="UP000005640">
    <property type="component" value="Chromosome 6"/>
</dbReference>
<dbReference type="RNAct" id="Q8N1G2">
    <property type="molecule type" value="protein"/>
</dbReference>
<dbReference type="Bgee" id="ENSG00000137200">
    <property type="expression patterns" value="Expressed in right testis and 185 other cell types or tissues"/>
</dbReference>
<dbReference type="ExpressionAtlas" id="Q8N1G2">
    <property type="expression patterns" value="baseline and differential"/>
</dbReference>
<dbReference type="GO" id="GO:0005737">
    <property type="term" value="C:cytoplasm"/>
    <property type="evidence" value="ECO:0000318"/>
    <property type="project" value="GO_Central"/>
</dbReference>
<dbReference type="GO" id="GO:0043231">
    <property type="term" value="C:intracellular membrane-bounded organelle"/>
    <property type="evidence" value="ECO:0000314"/>
    <property type="project" value="HPA"/>
</dbReference>
<dbReference type="GO" id="GO:0005654">
    <property type="term" value="C:nucleoplasm"/>
    <property type="evidence" value="ECO:0000314"/>
    <property type="project" value="HPA"/>
</dbReference>
<dbReference type="GO" id="GO:0005634">
    <property type="term" value="C:nucleus"/>
    <property type="evidence" value="ECO:0000314"/>
    <property type="project" value="UniProtKB"/>
</dbReference>
<dbReference type="GO" id="GO:0004483">
    <property type="term" value="F:mRNA (nucleoside-2'-O-)-methyltransferase activity"/>
    <property type="evidence" value="ECO:0000314"/>
    <property type="project" value="UniProtKB"/>
</dbReference>
<dbReference type="GO" id="GO:0003676">
    <property type="term" value="F:nucleic acid binding"/>
    <property type="evidence" value="ECO:0007669"/>
    <property type="project" value="InterPro"/>
</dbReference>
<dbReference type="GO" id="GO:0006370">
    <property type="term" value="P:7-methylguanosine mRNA capping"/>
    <property type="evidence" value="ECO:0000314"/>
    <property type="project" value="UniProtKB"/>
</dbReference>
<dbReference type="GO" id="GO:0032259">
    <property type="term" value="P:methylation"/>
    <property type="evidence" value="ECO:0007669"/>
    <property type="project" value="UniProtKB-KW"/>
</dbReference>
<dbReference type="GO" id="GO:0006397">
    <property type="term" value="P:mRNA processing"/>
    <property type="evidence" value="ECO:0000314"/>
    <property type="project" value="UniProtKB"/>
</dbReference>
<dbReference type="DisProt" id="DP02611"/>
<dbReference type="FunFam" id="3.30.470.30:FF:000006">
    <property type="entry name" value="Cap methyltransferase 1"/>
    <property type="match status" value="1"/>
</dbReference>
<dbReference type="FunFam" id="3.40.50.12760:FF:000001">
    <property type="entry name" value="Cap methyltransferase 1"/>
    <property type="match status" value="1"/>
</dbReference>
<dbReference type="Gene3D" id="3.40.50.12760">
    <property type="match status" value="1"/>
</dbReference>
<dbReference type="Gene3D" id="3.30.470.30">
    <property type="entry name" value="DNA ligase/mRNA capping enzyme"/>
    <property type="match status" value="1"/>
</dbReference>
<dbReference type="InterPro" id="IPR000467">
    <property type="entry name" value="G_patch_dom"/>
</dbReference>
<dbReference type="InterPro" id="IPR050851">
    <property type="entry name" value="mRNA_Cap_2O-Ribose_MeTrfase"/>
</dbReference>
<dbReference type="InterPro" id="IPR002877">
    <property type="entry name" value="RNA_MeTrfase_FtsJ_dom"/>
</dbReference>
<dbReference type="InterPro" id="IPR025816">
    <property type="entry name" value="RrmJ-type_MeTrfase"/>
</dbReference>
<dbReference type="InterPro" id="IPR029063">
    <property type="entry name" value="SAM-dependent_MTases_sf"/>
</dbReference>
<dbReference type="InterPro" id="IPR001202">
    <property type="entry name" value="WW_dom"/>
</dbReference>
<dbReference type="PANTHER" id="PTHR16121:SF0">
    <property type="entry name" value="CAP-SPECIFIC MRNA (NUCLEOSIDE-2'-O-)-METHYLTRANSFERASE 1"/>
    <property type="match status" value="1"/>
</dbReference>
<dbReference type="PANTHER" id="PTHR16121">
    <property type="entry name" value="CAP-SPECIFIC MRNA (NUCLEOSIDE-2'-O-)-METHYLTRANSFERASE 1-RELATED"/>
    <property type="match status" value="1"/>
</dbReference>
<dbReference type="Pfam" id="PF01728">
    <property type="entry name" value="FtsJ"/>
    <property type="match status" value="1"/>
</dbReference>
<dbReference type="Pfam" id="PF01585">
    <property type="entry name" value="G-patch"/>
    <property type="match status" value="1"/>
</dbReference>
<dbReference type="SMART" id="SM00443">
    <property type="entry name" value="G_patch"/>
    <property type="match status" value="1"/>
</dbReference>
<dbReference type="SMART" id="SM00456">
    <property type="entry name" value="WW"/>
    <property type="match status" value="1"/>
</dbReference>
<dbReference type="SUPFAM" id="SSF53335">
    <property type="entry name" value="S-adenosyl-L-methionine-dependent methyltransferases"/>
    <property type="match status" value="1"/>
</dbReference>
<dbReference type="PROSITE" id="PS50174">
    <property type="entry name" value="G_PATCH"/>
    <property type="match status" value="1"/>
</dbReference>
<dbReference type="PROSITE" id="PS51613">
    <property type="entry name" value="SAM_MT_RRMJ"/>
    <property type="match status" value="1"/>
</dbReference>
<dbReference type="PROSITE" id="PS01159">
    <property type="entry name" value="WW_DOMAIN_1"/>
    <property type="match status" value="1"/>
</dbReference>
<protein>
    <recommendedName>
        <fullName>Cap-specific mRNA (nucleoside-2'-O-)-methyltransferase 1</fullName>
        <ecNumber evidence="11">2.1.1.57</ecNumber>
    </recommendedName>
    <alternativeName>
        <fullName>Cap methyltransferase 1</fullName>
    </alternativeName>
    <alternativeName>
        <fullName>Cap1 2'O-ribose methyltransferase 1</fullName>
        <shortName>MTr1</shortName>
        <shortName>hMTr1</shortName>
    </alternativeName>
    <alternativeName>
        <fullName>FtsJ methyltransferase domain-containing protein 2</fullName>
    </alternativeName>
    <alternativeName>
        <fullName>Interferon-stimulated gene 95 kDa protein</fullName>
        <shortName>ISG95</shortName>
    </alternativeName>
</protein>
<name>CMTR1_HUMAN</name>
<reference key="1">
    <citation type="journal article" date="1995" name="DNA Res.">
        <title>Prediction of the coding sequences of unidentified human genes. III. The coding sequences of 40 new genes (KIAA0081-KIAA0120) deduced by analysis of cDNA clones from human cell line KG-1.</title>
        <authorList>
            <person name="Nagase T."/>
            <person name="Miyajima N."/>
            <person name="Tanaka A."/>
            <person name="Sazuka T."/>
            <person name="Seki N."/>
            <person name="Sato S."/>
            <person name="Tabata S."/>
            <person name="Ishikawa K."/>
            <person name="Kawarabayasi Y."/>
            <person name="Kotani H."/>
            <person name="Nomura N."/>
        </authorList>
    </citation>
    <scope>NUCLEOTIDE SEQUENCE [LARGE SCALE MRNA]</scope>
    <source>
        <tissue>Bone marrow</tissue>
    </source>
</reference>
<reference key="2">
    <citation type="submission" date="2005-01" db="EMBL/GenBank/DDBJ databases">
        <authorList>
            <person name="Ohara O."/>
            <person name="Nagase T."/>
            <person name="Kikuno R."/>
            <person name="Nomura N."/>
        </authorList>
    </citation>
    <scope>SEQUENCE REVISION</scope>
</reference>
<reference key="3">
    <citation type="journal article" date="2004" name="Nat. Genet.">
        <title>Complete sequencing and characterization of 21,243 full-length human cDNAs.</title>
        <authorList>
            <person name="Ota T."/>
            <person name="Suzuki Y."/>
            <person name="Nishikawa T."/>
            <person name="Otsuki T."/>
            <person name="Sugiyama T."/>
            <person name="Irie R."/>
            <person name="Wakamatsu A."/>
            <person name="Hayashi K."/>
            <person name="Sato H."/>
            <person name="Nagai K."/>
            <person name="Kimura K."/>
            <person name="Makita H."/>
            <person name="Sekine M."/>
            <person name="Obayashi M."/>
            <person name="Nishi T."/>
            <person name="Shibahara T."/>
            <person name="Tanaka T."/>
            <person name="Ishii S."/>
            <person name="Yamamoto J."/>
            <person name="Saito K."/>
            <person name="Kawai Y."/>
            <person name="Isono Y."/>
            <person name="Nakamura Y."/>
            <person name="Nagahari K."/>
            <person name="Murakami K."/>
            <person name="Yasuda T."/>
            <person name="Iwayanagi T."/>
            <person name="Wagatsuma M."/>
            <person name="Shiratori A."/>
            <person name="Sudo H."/>
            <person name="Hosoiri T."/>
            <person name="Kaku Y."/>
            <person name="Kodaira H."/>
            <person name="Kondo H."/>
            <person name="Sugawara M."/>
            <person name="Takahashi M."/>
            <person name="Kanda K."/>
            <person name="Yokoi T."/>
            <person name="Furuya T."/>
            <person name="Kikkawa E."/>
            <person name="Omura Y."/>
            <person name="Abe K."/>
            <person name="Kamihara K."/>
            <person name="Katsuta N."/>
            <person name="Sato K."/>
            <person name="Tanikawa M."/>
            <person name="Yamazaki M."/>
            <person name="Ninomiya K."/>
            <person name="Ishibashi T."/>
            <person name="Yamashita H."/>
            <person name="Murakawa K."/>
            <person name="Fujimori K."/>
            <person name="Tanai H."/>
            <person name="Kimata M."/>
            <person name="Watanabe M."/>
            <person name="Hiraoka S."/>
            <person name="Chiba Y."/>
            <person name="Ishida S."/>
            <person name="Ono Y."/>
            <person name="Takiguchi S."/>
            <person name="Watanabe S."/>
            <person name="Yosida M."/>
            <person name="Hotuta T."/>
            <person name="Kusano J."/>
            <person name="Kanehori K."/>
            <person name="Takahashi-Fujii A."/>
            <person name="Hara H."/>
            <person name="Tanase T.-O."/>
            <person name="Nomura Y."/>
            <person name="Togiya S."/>
            <person name="Komai F."/>
            <person name="Hara R."/>
            <person name="Takeuchi K."/>
            <person name="Arita M."/>
            <person name="Imose N."/>
            <person name="Musashino K."/>
            <person name="Yuuki H."/>
            <person name="Oshima A."/>
            <person name="Sasaki N."/>
            <person name="Aotsuka S."/>
            <person name="Yoshikawa Y."/>
            <person name="Matsunawa H."/>
            <person name="Ichihara T."/>
            <person name="Shiohata N."/>
            <person name="Sano S."/>
            <person name="Moriya S."/>
            <person name="Momiyama H."/>
            <person name="Satoh N."/>
            <person name="Takami S."/>
            <person name="Terashima Y."/>
            <person name="Suzuki O."/>
            <person name="Nakagawa S."/>
            <person name="Senoh A."/>
            <person name="Mizoguchi H."/>
            <person name="Goto Y."/>
            <person name="Shimizu F."/>
            <person name="Wakebe H."/>
            <person name="Hishigaki H."/>
            <person name="Watanabe T."/>
            <person name="Sugiyama A."/>
            <person name="Takemoto M."/>
            <person name="Kawakami B."/>
            <person name="Yamazaki M."/>
            <person name="Watanabe K."/>
            <person name="Kumagai A."/>
            <person name="Itakura S."/>
            <person name="Fukuzumi Y."/>
            <person name="Fujimori Y."/>
            <person name="Komiyama M."/>
            <person name="Tashiro H."/>
            <person name="Tanigami A."/>
            <person name="Fujiwara T."/>
            <person name="Ono T."/>
            <person name="Yamada K."/>
            <person name="Fujii Y."/>
            <person name="Ozaki K."/>
            <person name="Hirao M."/>
            <person name="Ohmori Y."/>
            <person name="Kawabata A."/>
            <person name="Hikiji T."/>
            <person name="Kobatake N."/>
            <person name="Inagaki H."/>
            <person name="Ikema Y."/>
            <person name="Okamoto S."/>
            <person name="Okitani R."/>
            <person name="Kawakami T."/>
            <person name="Noguchi S."/>
            <person name="Itoh T."/>
            <person name="Shigeta K."/>
            <person name="Senba T."/>
            <person name="Matsumura K."/>
            <person name="Nakajima Y."/>
            <person name="Mizuno T."/>
            <person name="Morinaga M."/>
            <person name="Sasaki M."/>
            <person name="Togashi T."/>
            <person name="Oyama M."/>
            <person name="Hata H."/>
            <person name="Watanabe M."/>
            <person name="Komatsu T."/>
            <person name="Mizushima-Sugano J."/>
            <person name="Satoh T."/>
            <person name="Shirai Y."/>
            <person name="Takahashi Y."/>
            <person name="Nakagawa K."/>
            <person name="Okumura K."/>
            <person name="Nagase T."/>
            <person name="Nomura N."/>
            <person name="Kikuchi H."/>
            <person name="Masuho Y."/>
            <person name="Yamashita R."/>
            <person name="Nakai K."/>
            <person name="Yada T."/>
            <person name="Nakamura Y."/>
            <person name="Ohara O."/>
            <person name="Isogai T."/>
            <person name="Sugano S."/>
        </authorList>
    </citation>
    <scope>NUCLEOTIDE SEQUENCE [LARGE SCALE MRNA]</scope>
    <source>
        <tissue>Testis</tissue>
    </source>
</reference>
<reference key="4">
    <citation type="journal article" date="2003" name="Nature">
        <title>The DNA sequence and analysis of human chromosome 6.</title>
        <authorList>
            <person name="Mungall A.J."/>
            <person name="Palmer S.A."/>
            <person name="Sims S.K."/>
            <person name="Edwards C.A."/>
            <person name="Ashurst J.L."/>
            <person name="Wilming L."/>
            <person name="Jones M.C."/>
            <person name="Horton R."/>
            <person name="Hunt S.E."/>
            <person name="Scott C.E."/>
            <person name="Gilbert J.G.R."/>
            <person name="Clamp M.E."/>
            <person name="Bethel G."/>
            <person name="Milne S."/>
            <person name="Ainscough R."/>
            <person name="Almeida J.P."/>
            <person name="Ambrose K.D."/>
            <person name="Andrews T.D."/>
            <person name="Ashwell R.I.S."/>
            <person name="Babbage A.K."/>
            <person name="Bagguley C.L."/>
            <person name="Bailey J."/>
            <person name="Banerjee R."/>
            <person name="Barker D.J."/>
            <person name="Barlow K.F."/>
            <person name="Bates K."/>
            <person name="Beare D.M."/>
            <person name="Beasley H."/>
            <person name="Beasley O."/>
            <person name="Bird C.P."/>
            <person name="Blakey S.E."/>
            <person name="Bray-Allen S."/>
            <person name="Brook J."/>
            <person name="Brown A.J."/>
            <person name="Brown J.Y."/>
            <person name="Burford D.C."/>
            <person name="Burrill W."/>
            <person name="Burton J."/>
            <person name="Carder C."/>
            <person name="Carter N.P."/>
            <person name="Chapman J.C."/>
            <person name="Clark S.Y."/>
            <person name="Clark G."/>
            <person name="Clee C.M."/>
            <person name="Clegg S."/>
            <person name="Cobley V."/>
            <person name="Collier R.E."/>
            <person name="Collins J.E."/>
            <person name="Colman L.K."/>
            <person name="Corby N.R."/>
            <person name="Coville G.J."/>
            <person name="Culley K.M."/>
            <person name="Dhami P."/>
            <person name="Davies J."/>
            <person name="Dunn M."/>
            <person name="Earthrowl M.E."/>
            <person name="Ellington A.E."/>
            <person name="Evans K.A."/>
            <person name="Faulkner L."/>
            <person name="Francis M.D."/>
            <person name="Frankish A."/>
            <person name="Frankland J."/>
            <person name="French L."/>
            <person name="Garner P."/>
            <person name="Garnett J."/>
            <person name="Ghori M.J."/>
            <person name="Gilby L.M."/>
            <person name="Gillson C.J."/>
            <person name="Glithero R.J."/>
            <person name="Grafham D.V."/>
            <person name="Grant M."/>
            <person name="Gribble S."/>
            <person name="Griffiths C."/>
            <person name="Griffiths M.N.D."/>
            <person name="Hall R."/>
            <person name="Halls K.S."/>
            <person name="Hammond S."/>
            <person name="Harley J.L."/>
            <person name="Hart E.A."/>
            <person name="Heath P.D."/>
            <person name="Heathcott R."/>
            <person name="Holmes S.J."/>
            <person name="Howden P.J."/>
            <person name="Howe K.L."/>
            <person name="Howell G.R."/>
            <person name="Huckle E."/>
            <person name="Humphray S.J."/>
            <person name="Humphries M.D."/>
            <person name="Hunt A.R."/>
            <person name="Johnson C.M."/>
            <person name="Joy A.A."/>
            <person name="Kay M."/>
            <person name="Keenan S.J."/>
            <person name="Kimberley A.M."/>
            <person name="King A."/>
            <person name="Laird G.K."/>
            <person name="Langford C."/>
            <person name="Lawlor S."/>
            <person name="Leongamornlert D.A."/>
            <person name="Leversha M."/>
            <person name="Lloyd C.R."/>
            <person name="Lloyd D.M."/>
            <person name="Loveland J.E."/>
            <person name="Lovell J."/>
            <person name="Martin S."/>
            <person name="Mashreghi-Mohammadi M."/>
            <person name="Maslen G.L."/>
            <person name="Matthews L."/>
            <person name="McCann O.T."/>
            <person name="McLaren S.J."/>
            <person name="McLay K."/>
            <person name="McMurray A."/>
            <person name="Moore M.J.F."/>
            <person name="Mullikin J.C."/>
            <person name="Niblett D."/>
            <person name="Nickerson T."/>
            <person name="Novik K.L."/>
            <person name="Oliver K."/>
            <person name="Overton-Larty E.K."/>
            <person name="Parker A."/>
            <person name="Patel R."/>
            <person name="Pearce A.V."/>
            <person name="Peck A.I."/>
            <person name="Phillimore B.J.C.T."/>
            <person name="Phillips S."/>
            <person name="Plumb R.W."/>
            <person name="Porter K.M."/>
            <person name="Ramsey Y."/>
            <person name="Ranby S.A."/>
            <person name="Rice C.M."/>
            <person name="Ross M.T."/>
            <person name="Searle S.M."/>
            <person name="Sehra H.K."/>
            <person name="Sheridan E."/>
            <person name="Skuce C.D."/>
            <person name="Smith S."/>
            <person name="Smith M."/>
            <person name="Spraggon L."/>
            <person name="Squares S.L."/>
            <person name="Steward C.A."/>
            <person name="Sycamore N."/>
            <person name="Tamlyn-Hall G."/>
            <person name="Tester J."/>
            <person name="Theaker A.J."/>
            <person name="Thomas D.W."/>
            <person name="Thorpe A."/>
            <person name="Tracey A."/>
            <person name="Tromans A."/>
            <person name="Tubby B."/>
            <person name="Wall M."/>
            <person name="Wallis J.M."/>
            <person name="West A.P."/>
            <person name="White S.S."/>
            <person name="Whitehead S.L."/>
            <person name="Whittaker H."/>
            <person name="Wild A."/>
            <person name="Willey D.J."/>
            <person name="Wilmer T.E."/>
            <person name="Wood J.M."/>
            <person name="Wray P.W."/>
            <person name="Wyatt J.C."/>
            <person name="Young L."/>
            <person name="Younger R.M."/>
            <person name="Bentley D.R."/>
            <person name="Coulson A."/>
            <person name="Durbin R.M."/>
            <person name="Hubbard T."/>
            <person name="Sulston J.E."/>
            <person name="Dunham I."/>
            <person name="Rogers J."/>
            <person name="Beck S."/>
        </authorList>
    </citation>
    <scope>NUCLEOTIDE SEQUENCE [LARGE SCALE GENOMIC DNA]</scope>
</reference>
<reference key="5">
    <citation type="journal article" date="2004" name="Genome Res.">
        <title>The status, quality, and expansion of the NIH full-length cDNA project: the Mammalian Gene Collection (MGC).</title>
        <authorList>
            <consortium name="The MGC Project Team"/>
        </authorList>
    </citation>
    <scope>NUCLEOTIDE SEQUENCE [LARGE SCALE MRNA]</scope>
    <source>
        <tissue>Brain</tissue>
        <tissue>Lung</tissue>
    </source>
</reference>
<reference key="6">
    <citation type="journal article" date="2003" name="J. Virol.">
        <title>Gene expression profiling of the cellular transcriptional network regulated by alpha/beta interferon and its partial attenuation by the hepatitis C virus nonstructural 5A protein.</title>
        <authorList>
            <person name="Geiss G.K."/>
            <person name="Carter V.S."/>
            <person name="He Y."/>
            <person name="Kwieciszewski B.K."/>
            <person name="Holzman T."/>
            <person name="Korth M.J."/>
            <person name="Lazaro C.A."/>
            <person name="Fausto N."/>
            <person name="Bumgarner R.E."/>
            <person name="Katze M.G."/>
        </authorList>
    </citation>
    <scope>INDUCTION BY INTERFERONS ALPHA AND BETA</scope>
</reference>
<reference key="7">
    <citation type="journal article" date="2003" name="J. Virol.">
        <title>Cellular gene expression survey of vaccinia virus infection of human HeLa cells.</title>
        <authorList>
            <person name="Guerra S."/>
            <person name="Lopez-Fernandez L.A."/>
            <person name="Pascual-Montano A."/>
            <person name="Munoz M."/>
            <person name="Harshman K."/>
            <person name="Esteban M."/>
        </authorList>
    </citation>
    <scope>INDUCTION BY VIRAL INFECTION</scope>
</reference>
<reference key="8">
    <citation type="journal article" date="2006" name="Cell">
        <title>Global, in vivo, and site-specific phosphorylation dynamics in signaling networks.</title>
        <authorList>
            <person name="Olsen J.V."/>
            <person name="Blagoev B."/>
            <person name="Gnad F."/>
            <person name="Macek B."/>
            <person name="Kumar C."/>
            <person name="Mortensen P."/>
            <person name="Mann M."/>
        </authorList>
    </citation>
    <scope>IDENTIFICATION BY MASS SPECTROMETRY [LARGE SCALE ANALYSIS]</scope>
    <source>
        <tissue>Cervix carcinoma</tissue>
    </source>
</reference>
<reference key="9">
    <citation type="journal article" date="2008" name="Biochem. Biophys. Res. Commun.">
        <title>The human interferon-regulated ISG95 protein interacts with RNA polymerase II and shows methyltransferase activity.</title>
        <authorList>
            <person name="Haline-Vaz T."/>
            <person name="Silva T.C.L."/>
            <person name="Zanchin N.I.T."/>
        </authorList>
    </citation>
    <scope>FUNCTION</scope>
    <scope>INTERACTION WITH POLR2A</scope>
    <scope>SUBCELLULAR LOCATION</scope>
    <scope>INDUCTION</scope>
</reference>
<reference key="10">
    <citation type="journal article" date="2008" name="Proc. Natl. Acad. Sci. U.S.A.">
        <title>A quantitative atlas of mitotic phosphorylation.</title>
        <authorList>
            <person name="Dephoure N."/>
            <person name="Zhou C."/>
            <person name="Villen J."/>
            <person name="Beausoleil S.A."/>
            <person name="Bakalarski C.E."/>
            <person name="Elledge S.J."/>
            <person name="Gygi S.P."/>
        </authorList>
    </citation>
    <scope>IDENTIFICATION BY MASS SPECTROMETRY [LARGE SCALE ANALYSIS]</scope>
    <source>
        <tissue>Cervix carcinoma</tissue>
    </source>
</reference>
<reference key="11">
    <citation type="journal article" date="2009" name="Anal. Chem.">
        <title>Lys-N and trypsin cover complementary parts of the phosphoproteome in a refined SCX-based approach.</title>
        <authorList>
            <person name="Gauci S."/>
            <person name="Helbig A.O."/>
            <person name="Slijper M."/>
            <person name="Krijgsveld J."/>
            <person name="Heck A.J."/>
            <person name="Mohammed S."/>
        </authorList>
    </citation>
    <scope>IDENTIFICATION BY MASS SPECTROMETRY [LARGE SCALE ANALYSIS]</scope>
</reference>
<reference key="12">
    <citation type="journal article" date="2009" name="Science">
        <title>Lysine acetylation targets protein complexes and co-regulates major cellular functions.</title>
        <authorList>
            <person name="Choudhary C."/>
            <person name="Kumar C."/>
            <person name="Gnad F."/>
            <person name="Nielsen M.L."/>
            <person name="Rehman M."/>
            <person name="Walther T.C."/>
            <person name="Olsen J.V."/>
            <person name="Mann M."/>
        </authorList>
    </citation>
    <scope>ACETYLATION [LARGE SCALE ANALYSIS] AT LYS-108</scope>
    <scope>IDENTIFICATION BY MASS SPECTROMETRY [LARGE SCALE ANALYSIS]</scope>
</reference>
<reference key="13">
    <citation type="journal article" date="2010" name="J. Biol. Chem.">
        <title>Characterization of hMTr1, a human Cap1 2'-O-Ribose methyltransferase.</title>
        <authorList>
            <person name="Belanger F."/>
            <person name="Stepinski J."/>
            <person name="Darzynkiewicz E."/>
            <person name="Pelletier J."/>
        </authorList>
    </citation>
    <scope>FUNCTION</scope>
</reference>
<reference key="14">
    <citation type="journal article" date="2010" name="Sci. Signal.">
        <title>Quantitative phosphoproteomics reveals widespread full phosphorylation site occupancy during mitosis.</title>
        <authorList>
            <person name="Olsen J.V."/>
            <person name="Vermeulen M."/>
            <person name="Santamaria A."/>
            <person name="Kumar C."/>
            <person name="Miller M.L."/>
            <person name="Jensen L.J."/>
            <person name="Gnad F."/>
            <person name="Cox J."/>
            <person name="Jensen T.S."/>
            <person name="Nigg E.A."/>
            <person name="Brunak S."/>
            <person name="Mann M."/>
        </authorList>
    </citation>
    <scope>IDENTIFICATION BY MASS SPECTROMETRY [LARGE SCALE ANALYSIS]</scope>
    <source>
        <tissue>Cervix carcinoma</tissue>
    </source>
</reference>
<reference key="15">
    <citation type="journal article" date="2011" name="BMC Syst. Biol.">
        <title>Initial characterization of the human central proteome.</title>
        <authorList>
            <person name="Burkard T.R."/>
            <person name="Planyavsky M."/>
            <person name="Kaupe I."/>
            <person name="Breitwieser F.P."/>
            <person name="Buerckstuemmer T."/>
            <person name="Bennett K.L."/>
            <person name="Superti-Furga G."/>
            <person name="Colinge J."/>
        </authorList>
    </citation>
    <scope>IDENTIFICATION BY MASS SPECTROMETRY [LARGE SCALE ANALYSIS]</scope>
</reference>
<reference key="16">
    <citation type="journal article" date="2011" name="Nucleic Acids Res.">
        <title>2'-O-ribose methylation of cap2 in human: function and evolution in a horizontally mobile family.</title>
        <authorList>
            <person name="Werner M."/>
            <person name="Purta E."/>
            <person name="Kaminska K.H."/>
            <person name="Cymerman I.A."/>
            <person name="Campbell D.A."/>
            <person name="Mittra B."/>
            <person name="Zamudio J.R."/>
            <person name="Sturm N.R."/>
            <person name="Jaworski J."/>
            <person name="Bujnicki J.M."/>
        </authorList>
    </citation>
    <scope>FUNCTION</scope>
    <scope>CATALYTIC ACTIVITY</scope>
    <scope>ACTIVE SITE</scope>
    <scope>SUBCELLULAR LOCATION</scope>
    <scope>MUTAGENESIS OF LYS-239; ASP-364 AND LYS-404</scope>
</reference>
<reference key="17">
    <citation type="journal article" date="2013" name="J. Proteome Res.">
        <title>Toward a comprehensive characterization of a human cancer cell phosphoproteome.</title>
        <authorList>
            <person name="Zhou H."/>
            <person name="Di Palma S."/>
            <person name="Preisinger C."/>
            <person name="Peng M."/>
            <person name="Polat A.N."/>
            <person name="Heck A.J."/>
            <person name="Mohammed S."/>
        </authorList>
    </citation>
    <scope>PHOSPHORYLATION [LARGE SCALE ANALYSIS] AT SER-66 AND SER-91</scope>
    <scope>IDENTIFICATION BY MASS SPECTROMETRY [LARGE SCALE ANALYSIS]</scope>
    <source>
        <tissue>Cervix carcinoma</tissue>
        <tissue>Erythroleukemia</tissue>
    </source>
</reference>
<reference key="18">
    <citation type="journal article" date="2014" name="J. Proteomics">
        <title>An enzyme assisted RP-RPLC approach for in-depth analysis of human liver phosphoproteome.</title>
        <authorList>
            <person name="Bian Y."/>
            <person name="Song C."/>
            <person name="Cheng K."/>
            <person name="Dong M."/>
            <person name="Wang F."/>
            <person name="Huang J."/>
            <person name="Sun D."/>
            <person name="Wang L."/>
            <person name="Ye M."/>
            <person name="Zou H."/>
        </authorList>
    </citation>
    <scope>PHOSPHORYLATION [LARGE SCALE ANALYSIS] AT SER-53</scope>
    <scope>IDENTIFICATION BY MASS SPECTROMETRY [LARGE SCALE ANALYSIS]</scope>
    <source>
        <tissue>Liver</tissue>
    </source>
</reference>
<reference key="19">
    <citation type="journal article" date="2014" name="Nat. Commun.">
        <title>Structural analysis of human 2'-O-ribose methyltransferases involved in mRNA cap structure formation.</title>
        <authorList>
            <person name="Smietanski M."/>
            <person name="Werner M."/>
            <person name="Purta E."/>
            <person name="Kaminska K.H."/>
            <person name="Stepinski J."/>
            <person name="Darzynkiewicz E."/>
            <person name="Nowotny M."/>
            <person name="Bujnicki J.M."/>
        </authorList>
    </citation>
    <scope>X-RAY CRYSTALLOGRAPHY (1.90 ANGSTROMS) OF 126-550 IN COMPLEX WITH S-ADENOSYL-L-METHIONINE AND A CAPPED OLIGORIBONUCLEOTIDE SUBSTRATE</scope>
    <scope>MUTAGENESIS OF LYS-203 AND ARG-228</scope>
</reference>
<proteinExistence type="evidence at protein level"/>